<organism>
    <name type="scientific">Aspergillus flavus (strain ATCC 200026 / FGSC A1120 / IAM 13836 / NRRL 3357 / JCM 12722 / SRRC 167)</name>
    <dbReference type="NCBI Taxonomy" id="332952"/>
    <lineage>
        <taxon>Eukaryota</taxon>
        <taxon>Fungi</taxon>
        <taxon>Dikarya</taxon>
        <taxon>Ascomycota</taxon>
        <taxon>Pezizomycotina</taxon>
        <taxon>Eurotiomycetes</taxon>
        <taxon>Eurotiomycetidae</taxon>
        <taxon>Eurotiales</taxon>
        <taxon>Aspergillaceae</taxon>
        <taxon>Aspergillus</taxon>
        <taxon>Aspergillus subgen. Circumdati</taxon>
    </lineage>
</organism>
<name>MDM34_ASPFN</name>
<accession>B8N0Q7</accession>
<feature type="chain" id="PRO_0000384325" description="Mitochondrial distribution and morphology protein 34">
    <location>
        <begin position="1"/>
        <end position="566"/>
    </location>
</feature>
<feature type="domain" description="SMP-LTD" evidence="1">
    <location>
        <begin position="1"/>
        <end position="195"/>
    </location>
</feature>
<feature type="region of interest" description="Disordered" evidence="2">
    <location>
        <begin position="212"/>
        <end position="237"/>
    </location>
</feature>
<feature type="region of interest" description="Disordered" evidence="2">
    <location>
        <begin position="349"/>
        <end position="401"/>
    </location>
</feature>
<feature type="region of interest" description="Disordered" evidence="2">
    <location>
        <begin position="432"/>
        <end position="518"/>
    </location>
</feature>
<feature type="region of interest" description="Disordered" evidence="2">
    <location>
        <begin position="539"/>
        <end position="566"/>
    </location>
</feature>
<feature type="compositionally biased region" description="Basic residues" evidence="2">
    <location>
        <begin position="358"/>
        <end position="370"/>
    </location>
</feature>
<feature type="compositionally biased region" description="Polar residues" evidence="2">
    <location>
        <begin position="380"/>
        <end position="401"/>
    </location>
</feature>
<feature type="compositionally biased region" description="Basic and acidic residues" evidence="2">
    <location>
        <begin position="444"/>
        <end position="454"/>
    </location>
</feature>
<comment type="function">
    <text evidence="1">Component of the ERMES/MDM complex, which serves as a molecular tether to connect the endoplasmic reticulum (ER) and mitochondria. Components of this complex are involved in the control of mitochondrial shape and protein biogenesis, and function in nonvesicular lipid trafficking between the ER and mitochondria. Mdm34 is required for the interaction of the ER-resident membrane protein mmm1 and the outer mitochondrial membrane-resident beta-barrel protein mdm10.</text>
</comment>
<comment type="subunit">
    <text evidence="1">Component of the ER-mitochondria encounter structure (ERMES) or MDM complex, composed of mmm1, mdm10, mdm12 and mdm34.</text>
</comment>
<comment type="subcellular location">
    <subcellularLocation>
        <location evidence="1">Mitochondrion outer membrane</location>
        <topology evidence="1">Multi-pass membrane protein</topology>
    </subcellularLocation>
    <text evidence="1">The ERMES/MDM complex localizes to a few discrete foci (around 10 per single cell), that represent mitochondria-endoplasmic reticulum junctions. These foci are often found next to mtDNA nucleoids.</text>
</comment>
<comment type="domain">
    <text evidence="1">Lacks alpha-helical transmembrane segments, suggesting that it resides in the membrane via beta-sheet conformations similar to those predicted for other outer membrane proteins and porin.</text>
</comment>
<comment type="domain">
    <text evidence="1">The SMP-LTD domain is a barrel-like domain that can bind various types of glycerophospholipids in its interior and mediate their transfer between two adjacent bilayers.</text>
</comment>
<comment type="similarity">
    <text evidence="1">Belongs to the MDM34 family.</text>
</comment>
<proteinExistence type="inferred from homology"/>
<dbReference type="EMBL" id="EQ963473">
    <property type="protein sequence ID" value="EED55320.1"/>
    <property type="molecule type" value="Genomic_DNA"/>
</dbReference>
<dbReference type="RefSeq" id="XP_002374102.1">
    <property type="nucleotide sequence ID" value="XM_002374061.1"/>
</dbReference>
<dbReference type="SMR" id="B8N0Q7"/>
<dbReference type="STRING" id="332952.B8N0Q7"/>
<dbReference type="EnsemblFungi" id="EED55320">
    <property type="protein sequence ID" value="EED55320"/>
    <property type="gene ID" value="AFLA_025920"/>
</dbReference>
<dbReference type="VEuPathDB" id="FungiDB:AFLA_000435"/>
<dbReference type="eggNOG" id="ENOG502QT3W">
    <property type="taxonomic scope" value="Eukaryota"/>
</dbReference>
<dbReference type="HOGENOM" id="CLU_036502_1_0_1"/>
<dbReference type="OMA" id="VFRAWSG"/>
<dbReference type="GO" id="GO:0032865">
    <property type="term" value="C:ERMES complex"/>
    <property type="evidence" value="ECO:0007669"/>
    <property type="project" value="UniProtKB-UniRule"/>
</dbReference>
<dbReference type="GO" id="GO:0008289">
    <property type="term" value="F:lipid binding"/>
    <property type="evidence" value="ECO:0007669"/>
    <property type="project" value="UniProtKB-KW"/>
</dbReference>
<dbReference type="GO" id="GO:0000002">
    <property type="term" value="P:mitochondrial genome maintenance"/>
    <property type="evidence" value="ECO:0007669"/>
    <property type="project" value="UniProtKB-UniRule"/>
</dbReference>
<dbReference type="GO" id="GO:1990456">
    <property type="term" value="P:mitochondrion-endoplasmic reticulum membrane tethering"/>
    <property type="evidence" value="ECO:0007669"/>
    <property type="project" value="TreeGrafter"/>
</dbReference>
<dbReference type="GO" id="GO:0015914">
    <property type="term" value="P:phospholipid transport"/>
    <property type="evidence" value="ECO:0007669"/>
    <property type="project" value="TreeGrafter"/>
</dbReference>
<dbReference type="CDD" id="cd21673">
    <property type="entry name" value="SMP_Mdm34"/>
    <property type="match status" value="1"/>
</dbReference>
<dbReference type="HAMAP" id="MF_03105">
    <property type="entry name" value="Mdm34"/>
    <property type="match status" value="1"/>
</dbReference>
<dbReference type="InterPro" id="IPR027536">
    <property type="entry name" value="Mdm34"/>
</dbReference>
<dbReference type="InterPro" id="IPR031468">
    <property type="entry name" value="SMP_LBD"/>
</dbReference>
<dbReference type="PANTHER" id="PTHR28185">
    <property type="entry name" value="MITOCHONDRIAL DISTRIBUTION AND MORPHOLOGY PROTEIN 34"/>
    <property type="match status" value="1"/>
</dbReference>
<dbReference type="PANTHER" id="PTHR28185:SF1">
    <property type="entry name" value="MITOCHONDRIAL DISTRIBUTION AND MORPHOLOGY PROTEIN 34"/>
    <property type="match status" value="1"/>
</dbReference>
<dbReference type="PROSITE" id="PS51847">
    <property type="entry name" value="SMP"/>
    <property type="match status" value="1"/>
</dbReference>
<sequence length="566" mass="61987">MAFNFNWSPLMADASFYTRAQDLLTAALNKSPKPPIIVDDIIVTELNLGSIPPDLEILEIGDLAEDRFRGIFKMSYTGDAFLTLKTRVQANPLNTYLLTRPSFASPLPLAAATPLTIPLQITLSDFKLSGFVILVFSKQKGITVVFRNDPLESLKVSSTFDSIPFVRDFLQREIEAQLRILFMDELPAIIHRLSLRLWVPEYRAGEDIQTQPEQTAGEGPGQDPLASPPQDPVDSLGNALDESEIASLSLDSSVEAHSLFSQKNLLRLGALTDSQRTLSLFTPSIQEVVYRAWTSPSEQGDANGISTAPLSPMLSRTHSQVGSMSSFQDSASIVSSQSRSSASTHTFSGYGLNLGAGRHSKAHSRKRKKRVVDLRRPKTTSDTASVSDESAYTETASNPSVCSAPLPVVNEQPDPITPPLSPESDFRLPAIPERRRASLSRPVPRRDIATEMLRETGGPSAEPPRHRPQPADVDATPRGSLRAHITAQHDNEKQETGPSRQLPSTILPFTDEKSSSSTVDQALVERLAGEIARRMRDEKLMPTSSCGGAFWGRPDHEEYPPPAYGQ</sequence>
<keyword id="KW-0445">Lipid transport</keyword>
<keyword id="KW-0446">Lipid-binding</keyword>
<keyword id="KW-0472">Membrane</keyword>
<keyword id="KW-0496">Mitochondrion</keyword>
<keyword id="KW-1000">Mitochondrion outer membrane</keyword>
<keyword id="KW-0812">Transmembrane</keyword>
<keyword id="KW-1134">Transmembrane beta strand</keyword>
<keyword id="KW-0813">Transport</keyword>
<protein>
    <recommendedName>
        <fullName evidence="1">Mitochondrial distribution and morphology protein 34</fullName>
    </recommendedName>
</protein>
<gene>
    <name evidence="1" type="primary">mdm34</name>
    <name type="ORF">AFLA_025920</name>
</gene>
<reference key="1">
    <citation type="journal article" date="2015" name="Genome Announc.">
        <title>Genome sequence of Aspergillus flavus NRRL 3357, a strain that causes aflatoxin contamination of food and feed.</title>
        <authorList>
            <person name="Nierman W.C."/>
            <person name="Yu J."/>
            <person name="Fedorova-Abrams N.D."/>
            <person name="Losada L."/>
            <person name="Cleveland T.E."/>
            <person name="Bhatnagar D."/>
            <person name="Bennett J.W."/>
            <person name="Dean R."/>
            <person name="Payne G.A."/>
        </authorList>
    </citation>
    <scope>NUCLEOTIDE SEQUENCE [LARGE SCALE GENOMIC DNA]</scope>
    <source>
        <strain>ATCC 200026 / FGSC A1120 / IAM 13836 / NRRL 3357 / JCM 12722 / SRRC 167</strain>
    </source>
</reference>
<evidence type="ECO:0000255" key="1">
    <source>
        <dbReference type="HAMAP-Rule" id="MF_03105"/>
    </source>
</evidence>
<evidence type="ECO:0000256" key="2">
    <source>
        <dbReference type="SAM" id="MobiDB-lite"/>
    </source>
</evidence>